<evidence type="ECO:0000255" key="1">
    <source>
        <dbReference type="HAMAP-Rule" id="MF_00195"/>
    </source>
</evidence>
<sequence>MSLPIVAIIGRPNVGKSTFVNRLAGNQQAIVHDQPGITRDRTYRPAFWRDRDFQVVDTGGLVFNDDSEFLPEIREQANLALAEAKAAIFVVDGQQGPTASDEEIAQWLRQQSVPVILAVNKCESPDQGAIQAAEFWHLGLGEPYPMSAIHGSGTGDLLDALLEYLPAPQEEPEEDEIKVAIVGRPNVGKSSLLNALTGEQRAIVSPISGTTRDAIDMVVERNGQKYRLIDTAGIRRKKNVDYGAEFFGINRAFKAIRRADVVLFVLDVLDGVTEQDLKLAGRIIEDGRAVVLVINKWDAVEKDSYTIYEHREQLMARLYFMDWAEMIFVSAQTGLRVQKILDCVDIAAQEHRRRVTTAVINEVLEEAVSWHSPPTTRQGKQGKIYYGTQVSTQPPAIALFVNDPNRFNDNYRRYIEKQFRKQLGFFGSPIRLFWRGKKVREMEGSRNRATKV</sequence>
<gene>
    <name evidence="1" type="primary">der</name>
    <name type="synonym">engA</name>
    <name type="ordered locus">slr1974</name>
</gene>
<accession>P74120</accession>
<reference key="1">
    <citation type="journal article" date="1996" name="DNA Res.">
        <title>Sequence analysis of the genome of the unicellular cyanobacterium Synechocystis sp. strain PCC6803. II. Sequence determination of the entire genome and assignment of potential protein-coding regions.</title>
        <authorList>
            <person name="Kaneko T."/>
            <person name="Sato S."/>
            <person name="Kotani H."/>
            <person name="Tanaka A."/>
            <person name="Asamizu E."/>
            <person name="Nakamura Y."/>
            <person name="Miyajima N."/>
            <person name="Hirosawa M."/>
            <person name="Sugiura M."/>
            <person name="Sasamoto S."/>
            <person name="Kimura T."/>
            <person name="Hosouchi T."/>
            <person name="Matsuno A."/>
            <person name="Muraki A."/>
            <person name="Nakazaki N."/>
            <person name="Naruo K."/>
            <person name="Okumura S."/>
            <person name="Shimpo S."/>
            <person name="Takeuchi C."/>
            <person name="Wada T."/>
            <person name="Watanabe A."/>
            <person name="Yamada M."/>
            <person name="Yasuda M."/>
            <person name="Tabata S."/>
        </authorList>
    </citation>
    <scope>NUCLEOTIDE SEQUENCE [LARGE SCALE GENOMIC DNA]</scope>
    <source>
        <strain>ATCC 27184 / PCC 6803 / Kazusa</strain>
    </source>
</reference>
<organism>
    <name type="scientific">Synechocystis sp. (strain ATCC 27184 / PCC 6803 / Kazusa)</name>
    <dbReference type="NCBI Taxonomy" id="1111708"/>
    <lineage>
        <taxon>Bacteria</taxon>
        <taxon>Bacillati</taxon>
        <taxon>Cyanobacteriota</taxon>
        <taxon>Cyanophyceae</taxon>
        <taxon>Synechococcales</taxon>
        <taxon>Merismopediaceae</taxon>
        <taxon>Synechocystis</taxon>
    </lineage>
</organism>
<protein>
    <recommendedName>
        <fullName evidence="1">GTPase Der</fullName>
    </recommendedName>
    <alternativeName>
        <fullName evidence="1">GTP-binding protein EngA</fullName>
    </alternativeName>
</protein>
<proteinExistence type="inferred from homology"/>
<name>DER_SYNY3</name>
<keyword id="KW-0342">GTP-binding</keyword>
<keyword id="KW-0547">Nucleotide-binding</keyword>
<keyword id="KW-1185">Reference proteome</keyword>
<keyword id="KW-0677">Repeat</keyword>
<keyword id="KW-0690">Ribosome biogenesis</keyword>
<dbReference type="EMBL" id="BA000022">
    <property type="protein sequence ID" value="BAA18206.1"/>
    <property type="molecule type" value="Genomic_DNA"/>
</dbReference>
<dbReference type="PIR" id="S75645">
    <property type="entry name" value="S75645"/>
</dbReference>
<dbReference type="SMR" id="P74120"/>
<dbReference type="FunCoup" id="P74120">
    <property type="interactions" value="412"/>
</dbReference>
<dbReference type="IntAct" id="P74120">
    <property type="interactions" value="11"/>
</dbReference>
<dbReference type="STRING" id="1148.gene:10499079"/>
<dbReference type="PaxDb" id="1148-1653291"/>
<dbReference type="EnsemblBacteria" id="BAA18206">
    <property type="protein sequence ID" value="BAA18206"/>
    <property type="gene ID" value="BAA18206"/>
</dbReference>
<dbReference type="KEGG" id="syn:slr1974"/>
<dbReference type="eggNOG" id="COG1160">
    <property type="taxonomic scope" value="Bacteria"/>
</dbReference>
<dbReference type="InParanoid" id="P74120"/>
<dbReference type="PhylomeDB" id="P74120"/>
<dbReference type="Proteomes" id="UP000001425">
    <property type="component" value="Chromosome"/>
</dbReference>
<dbReference type="GO" id="GO:0016887">
    <property type="term" value="F:ATP hydrolysis activity"/>
    <property type="evidence" value="ECO:0007669"/>
    <property type="project" value="InterPro"/>
</dbReference>
<dbReference type="GO" id="GO:0005525">
    <property type="term" value="F:GTP binding"/>
    <property type="evidence" value="ECO:0007669"/>
    <property type="project" value="UniProtKB-UniRule"/>
</dbReference>
<dbReference type="GO" id="GO:0043022">
    <property type="term" value="F:ribosome binding"/>
    <property type="evidence" value="ECO:0000318"/>
    <property type="project" value="GO_Central"/>
</dbReference>
<dbReference type="GO" id="GO:0042254">
    <property type="term" value="P:ribosome biogenesis"/>
    <property type="evidence" value="ECO:0007669"/>
    <property type="project" value="UniProtKB-KW"/>
</dbReference>
<dbReference type="CDD" id="cd01894">
    <property type="entry name" value="EngA1"/>
    <property type="match status" value="1"/>
</dbReference>
<dbReference type="CDD" id="cd01895">
    <property type="entry name" value="EngA2"/>
    <property type="match status" value="1"/>
</dbReference>
<dbReference type="FunFam" id="3.30.300.20:FF:000004">
    <property type="entry name" value="GTPase Der"/>
    <property type="match status" value="1"/>
</dbReference>
<dbReference type="FunFam" id="3.40.50.300:FF:000040">
    <property type="entry name" value="GTPase Der"/>
    <property type="match status" value="1"/>
</dbReference>
<dbReference type="FunFam" id="3.40.50.300:FF:001185">
    <property type="entry name" value="GTPase Der"/>
    <property type="match status" value="1"/>
</dbReference>
<dbReference type="Gene3D" id="3.30.300.20">
    <property type="match status" value="1"/>
</dbReference>
<dbReference type="Gene3D" id="3.40.50.300">
    <property type="entry name" value="P-loop containing nucleotide triphosphate hydrolases"/>
    <property type="match status" value="2"/>
</dbReference>
<dbReference type="HAMAP" id="MF_00195">
    <property type="entry name" value="GTPase_Der"/>
    <property type="match status" value="1"/>
</dbReference>
<dbReference type="InterPro" id="IPR003593">
    <property type="entry name" value="AAA+_ATPase"/>
</dbReference>
<dbReference type="InterPro" id="IPR031166">
    <property type="entry name" value="G_ENGA"/>
</dbReference>
<dbReference type="InterPro" id="IPR006073">
    <property type="entry name" value="GTP-bd"/>
</dbReference>
<dbReference type="InterPro" id="IPR016484">
    <property type="entry name" value="GTPase_Der"/>
</dbReference>
<dbReference type="InterPro" id="IPR032859">
    <property type="entry name" value="KH_dom-like"/>
</dbReference>
<dbReference type="InterPro" id="IPR015946">
    <property type="entry name" value="KH_dom-like_a/b"/>
</dbReference>
<dbReference type="InterPro" id="IPR027417">
    <property type="entry name" value="P-loop_NTPase"/>
</dbReference>
<dbReference type="InterPro" id="IPR005225">
    <property type="entry name" value="Small_GTP-bd"/>
</dbReference>
<dbReference type="NCBIfam" id="TIGR03594">
    <property type="entry name" value="GTPase_EngA"/>
    <property type="match status" value="1"/>
</dbReference>
<dbReference type="NCBIfam" id="TIGR00231">
    <property type="entry name" value="small_GTP"/>
    <property type="match status" value="2"/>
</dbReference>
<dbReference type="PANTHER" id="PTHR43834">
    <property type="entry name" value="GTPASE DER"/>
    <property type="match status" value="1"/>
</dbReference>
<dbReference type="PANTHER" id="PTHR43834:SF6">
    <property type="entry name" value="GTPASE DER"/>
    <property type="match status" value="1"/>
</dbReference>
<dbReference type="Pfam" id="PF14714">
    <property type="entry name" value="KH_dom-like"/>
    <property type="match status" value="1"/>
</dbReference>
<dbReference type="Pfam" id="PF01926">
    <property type="entry name" value="MMR_HSR1"/>
    <property type="match status" value="2"/>
</dbReference>
<dbReference type="PIRSF" id="PIRSF006485">
    <property type="entry name" value="GTP-binding_EngA"/>
    <property type="match status" value="1"/>
</dbReference>
<dbReference type="PRINTS" id="PR00326">
    <property type="entry name" value="GTP1OBG"/>
</dbReference>
<dbReference type="SMART" id="SM00382">
    <property type="entry name" value="AAA"/>
    <property type="match status" value="2"/>
</dbReference>
<dbReference type="SUPFAM" id="SSF52540">
    <property type="entry name" value="P-loop containing nucleoside triphosphate hydrolases"/>
    <property type="match status" value="2"/>
</dbReference>
<dbReference type="PROSITE" id="PS51712">
    <property type="entry name" value="G_ENGA"/>
    <property type="match status" value="2"/>
</dbReference>
<feature type="chain" id="PRO_0000179063" description="GTPase Der">
    <location>
        <begin position="1"/>
        <end position="452"/>
    </location>
</feature>
<feature type="domain" description="EngA-type G 1">
    <location>
        <begin position="4"/>
        <end position="169"/>
    </location>
</feature>
<feature type="domain" description="EngA-type G 2">
    <location>
        <begin position="177"/>
        <end position="352"/>
    </location>
</feature>
<feature type="domain" description="KH-like" evidence="1">
    <location>
        <begin position="353"/>
        <end position="439"/>
    </location>
</feature>
<feature type="binding site" evidence="1">
    <location>
        <begin position="10"/>
        <end position="17"/>
    </location>
    <ligand>
        <name>GTP</name>
        <dbReference type="ChEBI" id="CHEBI:37565"/>
        <label>1</label>
    </ligand>
</feature>
<feature type="binding site" evidence="1">
    <location>
        <begin position="57"/>
        <end position="61"/>
    </location>
    <ligand>
        <name>GTP</name>
        <dbReference type="ChEBI" id="CHEBI:37565"/>
        <label>1</label>
    </ligand>
</feature>
<feature type="binding site" evidence="1">
    <location>
        <begin position="120"/>
        <end position="123"/>
    </location>
    <ligand>
        <name>GTP</name>
        <dbReference type="ChEBI" id="CHEBI:37565"/>
        <label>1</label>
    </ligand>
</feature>
<feature type="binding site" evidence="1">
    <location>
        <begin position="183"/>
        <end position="190"/>
    </location>
    <ligand>
        <name>GTP</name>
        <dbReference type="ChEBI" id="CHEBI:37565"/>
        <label>2</label>
    </ligand>
</feature>
<feature type="binding site" evidence="1">
    <location>
        <begin position="230"/>
        <end position="234"/>
    </location>
    <ligand>
        <name>GTP</name>
        <dbReference type="ChEBI" id="CHEBI:37565"/>
        <label>2</label>
    </ligand>
</feature>
<feature type="binding site" evidence="1">
    <location>
        <begin position="295"/>
        <end position="298"/>
    </location>
    <ligand>
        <name>GTP</name>
        <dbReference type="ChEBI" id="CHEBI:37565"/>
        <label>2</label>
    </ligand>
</feature>
<comment type="function">
    <text evidence="1">GTPase that plays an essential role in the late steps of ribosome biogenesis.</text>
</comment>
<comment type="subunit">
    <text evidence="1">Associates with the 50S ribosomal subunit.</text>
</comment>
<comment type="similarity">
    <text evidence="1">Belongs to the TRAFAC class TrmE-Era-EngA-EngB-Septin-like GTPase superfamily. EngA (Der) GTPase family.</text>
</comment>